<dbReference type="EMBL" id="U14003">
    <property type="protein sequence ID" value="AAA97254.1"/>
    <property type="status" value="ALT_FRAME"/>
    <property type="molecule type" value="Genomic_DNA"/>
</dbReference>
<dbReference type="EMBL" id="U14003">
    <property type="protein sequence ID" value="AAA97253.1"/>
    <property type="status" value="ALT_FRAME"/>
    <property type="molecule type" value="Genomic_DNA"/>
</dbReference>
<dbReference type="EMBL" id="U00096">
    <property type="protein sequence ID" value="AAC77312.1"/>
    <property type="molecule type" value="Genomic_DNA"/>
</dbReference>
<dbReference type="EMBL" id="AP009048">
    <property type="protein sequence ID" value="BAE78346.1"/>
    <property type="molecule type" value="Genomic_DNA"/>
</dbReference>
<dbReference type="PIR" id="F65250">
    <property type="entry name" value="F65250"/>
</dbReference>
<dbReference type="PIR" id="S56583">
    <property type="entry name" value="S56583"/>
</dbReference>
<dbReference type="RefSeq" id="NP_418776.1">
    <property type="nucleotide sequence ID" value="NC_000913.3"/>
</dbReference>
<dbReference type="RefSeq" id="WP_000410113.1">
    <property type="nucleotide sequence ID" value="NZ_LN832404.1"/>
</dbReference>
<dbReference type="SMR" id="P39398"/>
<dbReference type="BioGRID" id="4262773">
    <property type="interactions" value="125"/>
</dbReference>
<dbReference type="DIP" id="DIP-12656N"/>
<dbReference type="FunCoup" id="P39398">
    <property type="interactions" value="213"/>
</dbReference>
<dbReference type="IntAct" id="P39398">
    <property type="interactions" value="1"/>
</dbReference>
<dbReference type="STRING" id="511145.b4356"/>
<dbReference type="TCDB" id="2.A.1.14.33">
    <property type="family name" value="the major facilitator superfamily (mfs)"/>
</dbReference>
<dbReference type="PaxDb" id="511145-b4356"/>
<dbReference type="EnsemblBacteria" id="AAC77312">
    <property type="protein sequence ID" value="AAC77312"/>
    <property type="gene ID" value="b4356"/>
</dbReference>
<dbReference type="GeneID" id="948879"/>
<dbReference type="KEGG" id="ecj:JW4319"/>
<dbReference type="KEGG" id="eco:b4356"/>
<dbReference type="KEGG" id="ecoc:C3026_23535"/>
<dbReference type="PATRIC" id="fig|1411691.4.peg.2330"/>
<dbReference type="EchoBASE" id="EB2473"/>
<dbReference type="eggNOG" id="COG2271">
    <property type="taxonomic scope" value="Bacteria"/>
</dbReference>
<dbReference type="HOGENOM" id="CLU_001265_5_1_6"/>
<dbReference type="InParanoid" id="P39398"/>
<dbReference type="OMA" id="ECEYIQK"/>
<dbReference type="OrthoDB" id="8596007at2"/>
<dbReference type="PhylomeDB" id="P39398"/>
<dbReference type="BioCyc" id="EcoCyc:YJIZ-MONOMER"/>
<dbReference type="BioCyc" id="MetaCyc:YJIZ-MONOMER"/>
<dbReference type="PRO" id="PR:P39398"/>
<dbReference type="Proteomes" id="UP000000625">
    <property type="component" value="Chromosome"/>
</dbReference>
<dbReference type="GO" id="GO:0005886">
    <property type="term" value="C:plasma membrane"/>
    <property type="evidence" value="ECO:0000314"/>
    <property type="project" value="EcoCyc"/>
</dbReference>
<dbReference type="GO" id="GO:0022857">
    <property type="term" value="F:transmembrane transporter activity"/>
    <property type="evidence" value="ECO:0007669"/>
    <property type="project" value="InterPro"/>
</dbReference>
<dbReference type="GO" id="GO:0042873">
    <property type="term" value="P:aldonate transmembrane transport"/>
    <property type="evidence" value="ECO:0000315"/>
    <property type="project" value="EcoCyc"/>
</dbReference>
<dbReference type="CDD" id="cd17319">
    <property type="entry name" value="MFS_ExuT_GudP_like"/>
    <property type="match status" value="1"/>
</dbReference>
<dbReference type="FunFam" id="1.20.1250.20:FF:000239">
    <property type="entry name" value="Probable L-galactonate transporter"/>
    <property type="match status" value="1"/>
</dbReference>
<dbReference type="FunFam" id="1.20.1250.20:FF:000243">
    <property type="entry name" value="Probable L-galactonate transporter"/>
    <property type="match status" value="1"/>
</dbReference>
<dbReference type="Gene3D" id="1.20.1250.20">
    <property type="entry name" value="MFS general substrate transporter like domains"/>
    <property type="match status" value="2"/>
</dbReference>
<dbReference type="InterPro" id="IPR011701">
    <property type="entry name" value="MFS"/>
</dbReference>
<dbReference type="InterPro" id="IPR020846">
    <property type="entry name" value="MFS_dom"/>
</dbReference>
<dbReference type="InterPro" id="IPR050382">
    <property type="entry name" value="MFS_Na/Anion_cotransporter"/>
</dbReference>
<dbReference type="InterPro" id="IPR036259">
    <property type="entry name" value="MFS_trans_sf"/>
</dbReference>
<dbReference type="InterPro" id="IPR000849">
    <property type="entry name" value="Sugar_P_transporter"/>
</dbReference>
<dbReference type="PANTHER" id="PTHR11662:SF399">
    <property type="entry name" value="FI19708P1-RELATED"/>
    <property type="match status" value="1"/>
</dbReference>
<dbReference type="PANTHER" id="PTHR11662">
    <property type="entry name" value="SOLUTE CARRIER FAMILY 17"/>
    <property type="match status" value="1"/>
</dbReference>
<dbReference type="Pfam" id="PF07690">
    <property type="entry name" value="MFS_1"/>
    <property type="match status" value="1"/>
</dbReference>
<dbReference type="PIRSF" id="PIRSF002808">
    <property type="entry name" value="Hexose_phosphate_transp"/>
    <property type="match status" value="1"/>
</dbReference>
<dbReference type="SUPFAM" id="SSF103473">
    <property type="entry name" value="MFS general substrate transporter"/>
    <property type="match status" value="1"/>
</dbReference>
<dbReference type="PROSITE" id="PS50850">
    <property type="entry name" value="MFS"/>
    <property type="match status" value="1"/>
</dbReference>
<gene>
    <name type="primary">lgoT</name>
    <name type="synonym">yjiZ</name>
    <name type="synonym">yjjL</name>
    <name type="ordered locus">b4356</name>
    <name type="ordered locus">JW4319</name>
</gene>
<comment type="function">
    <text evidence="4">Probably responsible for the transport of L-galactonate from the periplasm across the inner membrane. Is essential for growth on L-galactonate as the sole carbon source.</text>
</comment>
<comment type="catalytic activity">
    <reaction evidence="6">
        <text>L-galactonate(in) + H(+)(in) = L-galactonate(out) + H(+)(out)</text>
        <dbReference type="Rhea" id="RHEA:28823"/>
        <dbReference type="ChEBI" id="CHEBI:15378"/>
        <dbReference type="ChEBI" id="CHEBI:53071"/>
    </reaction>
    <physiologicalReaction direction="right-to-left" evidence="6">
        <dbReference type="Rhea" id="RHEA:28825"/>
    </physiologicalReaction>
</comment>
<comment type="subcellular location">
    <subcellularLocation>
        <location evidence="3">Cell inner membrane</location>
        <topology evidence="1">Multi-pass membrane protein</topology>
    </subcellularLocation>
</comment>
<comment type="induction">
    <text evidence="4">Highly up-regulated during growth on L-galactonate.</text>
</comment>
<comment type="disruption phenotype">
    <text evidence="4">Cells lacking this gene fail to grow on L-galactonate as sole carbon source.</text>
</comment>
<comment type="similarity">
    <text evidence="5">Belongs to the major facilitator superfamily. Phthalate permease family.</text>
</comment>
<sequence>MEKENITIDPRSSFTPSSSADIPVPPDGLVQRSTRIKRIQTTAMLLLFFAAVINYLDRSSLSVANLTIREELGLSATEIGALLSVFSLAYGIAQLPCGPLLDRKGPRLMLGLGMFFWSLFQAMSGMVHNFTQFVLVRIGMGIGEAPMNPCGVKVINDWFNIKERGRPMGFFNAASTIGVAVSPPILAAMMLVMGWRGMFITIGVLGIFLAIGWYMLYRNREHVELTAVEQAYLNAGSVNARRDPLSFAEWRSLFRNRTMWGMMLGFSGINYTAWLYLAWLPGYLQTAYNLDLKSTGLMAAIPFLFGAAGMLVNGYVTDWLVKGGMAPIKSRKICIIAGMFCSAAFTLIVPQATTSMTAVLLIGMALFCIHFAGTSCWGLIHVAVASRMTASVGSIQNFASFICASFAPIITGFIVDTTHSFRLALIICGCVTAAGALAYIFLVRQPINDPRKD</sequence>
<organism>
    <name type="scientific">Escherichia coli (strain K12)</name>
    <dbReference type="NCBI Taxonomy" id="83333"/>
    <lineage>
        <taxon>Bacteria</taxon>
        <taxon>Pseudomonadati</taxon>
        <taxon>Pseudomonadota</taxon>
        <taxon>Gammaproteobacteria</taxon>
        <taxon>Enterobacterales</taxon>
        <taxon>Enterobacteriaceae</taxon>
        <taxon>Escherichia</taxon>
    </lineage>
</organism>
<protein>
    <recommendedName>
        <fullName>Probable L-galactonate transporter</fullName>
    </recommendedName>
    <alternativeName>
        <fullName>Galactonate:H(+) symporter</fullName>
    </alternativeName>
</protein>
<name>LGOT_ECOLI</name>
<reference key="1">
    <citation type="journal article" date="1995" name="Nucleic Acids Res.">
        <title>Analysis of the Escherichia coli genome VI: DNA sequence of the region from 92.8 through 100 minutes.</title>
        <authorList>
            <person name="Burland V.D."/>
            <person name="Plunkett G. III"/>
            <person name="Sofia H.J."/>
            <person name="Daniels D.L."/>
            <person name="Blattner F.R."/>
        </authorList>
    </citation>
    <scope>NUCLEOTIDE SEQUENCE [LARGE SCALE GENOMIC DNA]</scope>
    <source>
        <strain>K12 / MG1655 / ATCC 47076</strain>
    </source>
</reference>
<reference key="2">
    <citation type="journal article" date="1997" name="Science">
        <title>The complete genome sequence of Escherichia coli K-12.</title>
        <authorList>
            <person name="Blattner F.R."/>
            <person name="Plunkett G. III"/>
            <person name="Bloch C.A."/>
            <person name="Perna N.T."/>
            <person name="Burland V."/>
            <person name="Riley M."/>
            <person name="Collado-Vides J."/>
            <person name="Glasner J.D."/>
            <person name="Rode C.K."/>
            <person name="Mayhew G.F."/>
            <person name="Gregor J."/>
            <person name="Davis N.W."/>
            <person name="Kirkpatrick H.A."/>
            <person name="Goeden M.A."/>
            <person name="Rose D.J."/>
            <person name="Mau B."/>
            <person name="Shao Y."/>
        </authorList>
    </citation>
    <scope>NUCLEOTIDE SEQUENCE [LARGE SCALE GENOMIC DNA]</scope>
    <scope>SEQUENCE REVISION</scope>
    <source>
        <strain>K12 / MG1655 / ATCC 47076</strain>
    </source>
</reference>
<reference key="3">
    <citation type="journal article" date="2006" name="Mol. Syst. Biol.">
        <title>Highly accurate genome sequences of Escherichia coli K-12 strains MG1655 and W3110.</title>
        <authorList>
            <person name="Hayashi K."/>
            <person name="Morooka N."/>
            <person name="Yamamoto Y."/>
            <person name="Fujita K."/>
            <person name="Isono K."/>
            <person name="Choi S."/>
            <person name="Ohtsubo E."/>
            <person name="Baba T."/>
            <person name="Wanner B.L."/>
            <person name="Mori H."/>
            <person name="Horiuchi T."/>
        </authorList>
    </citation>
    <scope>NUCLEOTIDE SEQUENCE [LARGE SCALE GENOMIC DNA]</scope>
    <source>
        <strain>K12 / W3110 / ATCC 27325 / DSM 5911</strain>
    </source>
</reference>
<reference key="4">
    <citation type="journal article" date="2005" name="Science">
        <title>Global topology analysis of the Escherichia coli inner membrane proteome.</title>
        <authorList>
            <person name="Daley D.O."/>
            <person name="Rapp M."/>
            <person name="Granseth E."/>
            <person name="Melen K."/>
            <person name="Drew D."/>
            <person name="von Heijne G."/>
        </authorList>
    </citation>
    <scope>TOPOLOGY [LARGE SCALE ANALYSIS]</scope>
    <scope>SUBCELLULAR LOCATION</scope>
    <source>
        <strain>K12 / MG1655 / ATCC 47076</strain>
    </source>
</reference>
<reference key="5">
    <citation type="journal article" date="2006" name="Proc. Natl. Acad. Sci. U.S.A.">
        <title>Systems approach to refining genome annotation.</title>
        <authorList>
            <person name="Reed J.L."/>
            <person name="Patel T.R."/>
            <person name="Chen K.H."/>
            <person name="Joyce A.R."/>
            <person name="Applebee M.K."/>
            <person name="Herring C.D."/>
            <person name="Bui O.T."/>
            <person name="Knight E.M."/>
            <person name="Fong S.S."/>
            <person name="Palsson B.O."/>
        </authorList>
    </citation>
    <scope>FUNCTION</scope>
    <scope>ROLE IN L-GALACTONATE UTILIZATION</scope>
    <scope>DISRUPTION PHENOTYPE</scope>
    <scope>INDUCTION</scope>
</reference>
<keyword id="KW-0997">Cell inner membrane</keyword>
<keyword id="KW-1003">Cell membrane</keyword>
<keyword id="KW-0472">Membrane</keyword>
<keyword id="KW-1185">Reference proteome</keyword>
<keyword id="KW-0762">Sugar transport</keyword>
<keyword id="KW-0812">Transmembrane</keyword>
<keyword id="KW-1133">Transmembrane helix</keyword>
<keyword id="KW-0813">Transport</keyword>
<evidence type="ECO:0000255" key="1"/>
<evidence type="ECO:0000256" key="2">
    <source>
        <dbReference type="SAM" id="MobiDB-lite"/>
    </source>
</evidence>
<evidence type="ECO:0000269" key="3">
    <source>
    </source>
</evidence>
<evidence type="ECO:0000269" key="4">
    <source>
    </source>
</evidence>
<evidence type="ECO:0000305" key="5"/>
<evidence type="ECO:0000305" key="6">
    <source>
    </source>
</evidence>
<proteinExistence type="evidence at protein level"/>
<accession>P39398</accession>
<accession>P39397</accession>
<accession>Q2M5W0</accession>
<feature type="chain" id="PRO_0000121391" description="Probable L-galactonate transporter">
    <location>
        <begin position="1"/>
        <end position="453"/>
    </location>
</feature>
<feature type="topological domain" description="Periplasmic" evidence="1">
    <location>
        <begin position="1"/>
        <end position="42"/>
    </location>
</feature>
<feature type="transmembrane region" description="Helical" evidence="1">
    <location>
        <begin position="43"/>
        <end position="63"/>
    </location>
</feature>
<feature type="topological domain" description="Cytoplasmic" evidence="1">
    <location>
        <begin position="64"/>
        <end position="71"/>
    </location>
</feature>
<feature type="transmembrane region" description="Helical" evidence="1">
    <location>
        <begin position="72"/>
        <end position="92"/>
    </location>
</feature>
<feature type="topological domain" description="Periplasmic" evidence="1">
    <location>
        <begin position="93"/>
        <end position="107"/>
    </location>
</feature>
<feature type="transmembrane region" description="Helical" evidence="1">
    <location>
        <begin position="108"/>
        <end position="128"/>
    </location>
</feature>
<feature type="topological domain" description="Cytoplasmic" evidence="1">
    <location>
        <begin position="129"/>
        <end position="174"/>
    </location>
</feature>
<feature type="transmembrane region" description="Helical" evidence="1">
    <location>
        <begin position="175"/>
        <end position="195"/>
    </location>
</feature>
<feature type="topological domain" description="Periplasmic" evidence="1">
    <location>
        <position position="196"/>
    </location>
</feature>
<feature type="transmembrane region" description="Helical" evidence="1">
    <location>
        <begin position="197"/>
        <end position="217"/>
    </location>
</feature>
<feature type="topological domain" description="Cytoplasmic" evidence="1">
    <location>
        <begin position="218"/>
        <end position="259"/>
    </location>
</feature>
<feature type="transmembrane region" description="Helical" evidence="1">
    <location>
        <begin position="260"/>
        <end position="280"/>
    </location>
</feature>
<feature type="topological domain" description="Periplasmic" evidence="1">
    <location>
        <begin position="281"/>
        <end position="295"/>
    </location>
</feature>
<feature type="transmembrane region" description="Helical" evidence="1">
    <location>
        <begin position="296"/>
        <end position="316"/>
    </location>
</feature>
<feature type="topological domain" description="Cytoplasmic" evidence="1">
    <location>
        <begin position="317"/>
        <end position="332"/>
    </location>
</feature>
<feature type="transmembrane region" description="Helical" evidence="1">
    <location>
        <begin position="333"/>
        <end position="353"/>
    </location>
</feature>
<feature type="topological domain" description="Periplasmic" evidence="1">
    <location>
        <begin position="354"/>
        <end position="359"/>
    </location>
</feature>
<feature type="transmembrane region" description="Helical" evidence="1">
    <location>
        <begin position="360"/>
        <end position="380"/>
    </location>
</feature>
<feature type="topological domain" description="Cytoplasmic" evidence="1">
    <location>
        <begin position="381"/>
        <end position="394"/>
    </location>
</feature>
<feature type="transmembrane region" description="Helical" evidence="1">
    <location>
        <begin position="395"/>
        <end position="415"/>
    </location>
</feature>
<feature type="topological domain" description="Periplasmic" evidence="1">
    <location>
        <begin position="416"/>
        <end position="422"/>
    </location>
</feature>
<feature type="transmembrane region" description="Helical" evidence="1">
    <location>
        <begin position="423"/>
        <end position="443"/>
    </location>
</feature>
<feature type="topological domain" description="Cytoplasmic" evidence="3">
    <location>
        <begin position="444"/>
        <end position="453"/>
    </location>
</feature>
<feature type="region of interest" description="Disordered" evidence="2">
    <location>
        <begin position="1"/>
        <end position="23"/>
    </location>
</feature>
<feature type="compositionally biased region" description="Polar residues" evidence="2">
    <location>
        <begin position="10"/>
        <end position="20"/>
    </location>
</feature>